<feature type="chain" id="PRO_0000227466" description="UvrABC system protein C">
    <location>
        <begin position="1"/>
        <end position="663"/>
    </location>
</feature>
<feature type="domain" description="GIY-YIG" evidence="1">
    <location>
        <begin position="32"/>
        <end position="110"/>
    </location>
</feature>
<feature type="domain" description="UVR" evidence="1">
    <location>
        <begin position="219"/>
        <end position="254"/>
    </location>
</feature>
<feature type="region of interest" description="Disordered" evidence="2">
    <location>
        <begin position="1"/>
        <end position="24"/>
    </location>
</feature>
<feature type="compositionally biased region" description="Low complexity" evidence="2">
    <location>
        <begin position="1"/>
        <end position="20"/>
    </location>
</feature>
<name>UVRC_CUPPJ</name>
<gene>
    <name evidence="1" type="primary">uvrC</name>
    <name type="ordered locus">Reut_A2244</name>
</gene>
<dbReference type="EMBL" id="CP000090">
    <property type="protein sequence ID" value="AAZ61607.1"/>
    <property type="molecule type" value="Genomic_DNA"/>
</dbReference>
<dbReference type="SMR" id="Q46Z26"/>
<dbReference type="STRING" id="264198.Reut_A2244"/>
<dbReference type="KEGG" id="reu:Reut_A2244"/>
<dbReference type="eggNOG" id="COG0322">
    <property type="taxonomic scope" value="Bacteria"/>
</dbReference>
<dbReference type="HOGENOM" id="CLU_014841_3_0_4"/>
<dbReference type="OrthoDB" id="9804933at2"/>
<dbReference type="GO" id="GO:0005737">
    <property type="term" value="C:cytoplasm"/>
    <property type="evidence" value="ECO:0007669"/>
    <property type="project" value="UniProtKB-SubCell"/>
</dbReference>
<dbReference type="GO" id="GO:0009380">
    <property type="term" value="C:excinuclease repair complex"/>
    <property type="evidence" value="ECO:0007669"/>
    <property type="project" value="InterPro"/>
</dbReference>
<dbReference type="GO" id="GO:0003677">
    <property type="term" value="F:DNA binding"/>
    <property type="evidence" value="ECO:0007669"/>
    <property type="project" value="UniProtKB-UniRule"/>
</dbReference>
<dbReference type="GO" id="GO:0009381">
    <property type="term" value="F:excinuclease ABC activity"/>
    <property type="evidence" value="ECO:0007669"/>
    <property type="project" value="UniProtKB-UniRule"/>
</dbReference>
<dbReference type="GO" id="GO:0006289">
    <property type="term" value="P:nucleotide-excision repair"/>
    <property type="evidence" value="ECO:0007669"/>
    <property type="project" value="UniProtKB-UniRule"/>
</dbReference>
<dbReference type="GO" id="GO:0009432">
    <property type="term" value="P:SOS response"/>
    <property type="evidence" value="ECO:0007669"/>
    <property type="project" value="UniProtKB-UniRule"/>
</dbReference>
<dbReference type="CDD" id="cd10434">
    <property type="entry name" value="GIY-YIG_UvrC_Cho"/>
    <property type="match status" value="1"/>
</dbReference>
<dbReference type="FunFam" id="3.30.420.340:FF:000001">
    <property type="entry name" value="UvrABC system protein C"/>
    <property type="match status" value="1"/>
</dbReference>
<dbReference type="FunFam" id="3.40.1440.10:FF:000001">
    <property type="entry name" value="UvrABC system protein C"/>
    <property type="match status" value="1"/>
</dbReference>
<dbReference type="Gene3D" id="1.10.150.20">
    <property type="entry name" value="5' to 3' exonuclease, C-terminal subdomain"/>
    <property type="match status" value="1"/>
</dbReference>
<dbReference type="Gene3D" id="3.40.1440.10">
    <property type="entry name" value="GIY-YIG endonuclease"/>
    <property type="match status" value="1"/>
</dbReference>
<dbReference type="Gene3D" id="4.10.860.10">
    <property type="entry name" value="UVR domain"/>
    <property type="match status" value="1"/>
</dbReference>
<dbReference type="Gene3D" id="3.30.420.340">
    <property type="entry name" value="UvrC, RNAse H endonuclease domain"/>
    <property type="match status" value="1"/>
</dbReference>
<dbReference type="HAMAP" id="MF_00203">
    <property type="entry name" value="UvrC"/>
    <property type="match status" value="1"/>
</dbReference>
<dbReference type="InterPro" id="IPR000305">
    <property type="entry name" value="GIY-YIG_endonuc"/>
</dbReference>
<dbReference type="InterPro" id="IPR035901">
    <property type="entry name" value="GIY-YIG_endonuc_sf"/>
</dbReference>
<dbReference type="InterPro" id="IPR047296">
    <property type="entry name" value="GIY-YIG_UvrC_Cho"/>
</dbReference>
<dbReference type="InterPro" id="IPR010994">
    <property type="entry name" value="RuvA_2-like"/>
</dbReference>
<dbReference type="InterPro" id="IPR001943">
    <property type="entry name" value="UVR_dom"/>
</dbReference>
<dbReference type="InterPro" id="IPR036876">
    <property type="entry name" value="UVR_dom_sf"/>
</dbReference>
<dbReference type="InterPro" id="IPR050066">
    <property type="entry name" value="UvrABC_protein_C"/>
</dbReference>
<dbReference type="InterPro" id="IPR004791">
    <property type="entry name" value="UvrC"/>
</dbReference>
<dbReference type="InterPro" id="IPR001162">
    <property type="entry name" value="UvrC_RNase_H_dom"/>
</dbReference>
<dbReference type="InterPro" id="IPR038476">
    <property type="entry name" value="UvrC_RNase_H_dom_sf"/>
</dbReference>
<dbReference type="NCBIfam" id="NF001824">
    <property type="entry name" value="PRK00558.1-5"/>
    <property type="match status" value="1"/>
</dbReference>
<dbReference type="NCBIfam" id="TIGR00194">
    <property type="entry name" value="uvrC"/>
    <property type="match status" value="1"/>
</dbReference>
<dbReference type="PANTHER" id="PTHR30562:SF1">
    <property type="entry name" value="UVRABC SYSTEM PROTEIN C"/>
    <property type="match status" value="1"/>
</dbReference>
<dbReference type="PANTHER" id="PTHR30562">
    <property type="entry name" value="UVRC/OXIDOREDUCTASE"/>
    <property type="match status" value="1"/>
</dbReference>
<dbReference type="Pfam" id="PF01541">
    <property type="entry name" value="GIY-YIG"/>
    <property type="match status" value="1"/>
</dbReference>
<dbReference type="Pfam" id="PF14520">
    <property type="entry name" value="HHH_5"/>
    <property type="match status" value="1"/>
</dbReference>
<dbReference type="Pfam" id="PF02151">
    <property type="entry name" value="UVR"/>
    <property type="match status" value="1"/>
</dbReference>
<dbReference type="Pfam" id="PF22920">
    <property type="entry name" value="UvrC_RNaseH"/>
    <property type="match status" value="1"/>
</dbReference>
<dbReference type="Pfam" id="PF08459">
    <property type="entry name" value="UvrC_RNaseH_dom"/>
    <property type="match status" value="1"/>
</dbReference>
<dbReference type="SMART" id="SM00465">
    <property type="entry name" value="GIYc"/>
    <property type="match status" value="1"/>
</dbReference>
<dbReference type="SUPFAM" id="SSF46600">
    <property type="entry name" value="C-terminal UvrC-binding domain of UvrB"/>
    <property type="match status" value="1"/>
</dbReference>
<dbReference type="SUPFAM" id="SSF82771">
    <property type="entry name" value="GIY-YIG endonuclease"/>
    <property type="match status" value="1"/>
</dbReference>
<dbReference type="SUPFAM" id="SSF47781">
    <property type="entry name" value="RuvA domain 2-like"/>
    <property type="match status" value="1"/>
</dbReference>
<dbReference type="PROSITE" id="PS50164">
    <property type="entry name" value="GIY_YIG"/>
    <property type="match status" value="1"/>
</dbReference>
<dbReference type="PROSITE" id="PS50151">
    <property type="entry name" value="UVR"/>
    <property type="match status" value="1"/>
</dbReference>
<dbReference type="PROSITE" id="PS50165">
    <property type="entry name" value="UVRC"/>
    <property type="match status" value="1"/>
</dbReference>
<protein>
    <recommendedName>
        <fullName evidence="1">UvrABC system protein C</fullName>
        <shortName evidence="1">Protein UvrC</shortName>
    </recommendedName>
    <alternativeName>
        <fullName evidence="1">Excinuclease ABC subunit C</fullName>
    </alternativeName>
</protein>
<proteinExistence type="inferred from homology"/>
<keyword id="KW-0963">Cytoplasm</keyword>
<keyword id="KW-0227">DNA damage</keyword>
<keyword id="KW-0228">DNA excision</keyword>
<keyword id="KW-0234">DNA repair</keyword>
<keyword id="KW-0267">Excision nuclease</keyword>
<keyword id="KW-0742">SOS response</keyword>
<evidence type="ECO:0000255" key="1">
    <source>
        <dbReference type="HAMAP-Rule" id="MF_00203"/>
    </source>
</evidence>
<evidence type="ECO:0000256" key="2">
    <source>
        <dbReference type="SAM" id="MobiDB-lite"/>
    </source>
</evidence>
<sequence>MSDQLPDASAQPPDPAQAEPFDPKPVIARLPGLPGVYRYIDSAGNVLYVGKARNLKKRVSSYFNKTQLSPRIAMMVAKIARIDTTVVRTEAEALLLENNLIKALAPRYNILFRDDKSYPFLKLTGHRFPRMAYYRGATDRKHQYFGPFPSAYAVRESMQILQKVFQLRTCEDTVFNNRTRPCLLHQIHRCTGPCVGAISEADYARDVGNAASFLQGRETEVLEGLQSKMEEHAMQLEFEQAAAVRDQIAALSTVLKRQAVEEVGQARDIDVLAVAVEGGRACVNLAMVRGGRHLGDKAYFPAHADEAAMIVEDGDEGAEGGETEPAPAVPLGVERIAARVLSAFMVQHYLDQAPPPIIVVSHVPDDAALLEALALHAGRKIALVRQPQGQRKAWLEMAQQGAALALARRLSEQGSQEARTRALAETIGIDLEDLALLRVECFDISHTAGEATQASCVVFHHHDMQNGEYRRYNIQDITPGDDYAAMRQVLTRRYQKLVELMQEQGGLDPAGEASSPMPHVVLIDGGKGQVEVARQVFEELGLDIGLLVGVAKGEGRKVGLETLVFADGRPSLELGQGSAALMLVAQIRDEAHRFAITGMRARRAKARTTSRLEEIEGVGARRRQKLLTRFGGLRGVMAASIDELASVDGISRGLAEEIYRQLH</sequence>
<organism>
    <name type="scientific">Cupriavidus pinatubonensis (strain JMP 134 / LMG 1197)</name>
    <name type="common">Cupriavidus necator (strain JMP 134)</name>
    <dbReference type="NCBI Taxonomy" id="264198"/>
    <lineage>
        <taxon>Bacteria</taxon>
        <taxon>Pseudomonadati</taxon>
        <taxon>Pseudomonadota</taxon>
        <taxon>Betaproteobacteria</taxon>
        <taxon>Burkholderiales</taxon>
        <taxon>Burkholderiaceae</taxon>
        <taxon>Cupriavidus</taxon>
    </lineage>
</organism>
<accession>Q46Z26</accession>
<comment type="function">
    <text evidence="1">The UvrABC repair system catalyzes the recognition and processing of DNA lesions. UvrC both incises the 5' and 3' sides of the lesion. The N-terminal half is responsible for the 3' incision and the C-terminal half is responsible for the 5' incision.</text>
</comment>
<comment type="subunit">
    <text evidence="1">Interacts with UvrB in an incision complex.</text>
</comment>
<comment type="subcellular location">
    <subcellularLocation>
        <location evidence="1">Cytoplasm</location>
    </subcellularLocation>
</comment>
<comment type="similarity">
    <text evidence="1">Belongs to the UvrC family.</text>
</comment>
<reference key="1">
    <citation type="journal article" date="2010" name="PLoS ONE">
        <title>The complete multipartite genome sequence of Cupriavidus necator JMP134, a versatile pollutant degrader.</title>
        <authorList>
            <person name="Lykidis A."/>
            <person name="Perez-Pantoja D."/>
            <person name="Ledger T."/>
            <person name="Mavromatis K."/>
            <person name="Anderson I.J."/>
            <person name="Ivanova N.N."/>
            <person name="Hooper S.D."/>
            <person name="Lapidus A."/>
            <person name="Lucas S."/>
            <person name="Gonzalez B."/>
            <person name="Kyrpides N.C."/>
        </authorList>
    </citation>
    <scope>NUCLEOTIDE SEQUENCE [LARGE SCALE GENOMIC DNA]</scope>
    <source>
        <strain>JMP134 / LMG 1197</strain>
    </source>
</reference>